<feature type="chain" id="PRO_0000188544" description="Alpha-glucan phosphorylase, H isozyme">
    <location>
        <begin position="1"/>
        <end position="842"/>
    </location>
</feature>
<feature type="modified residue" description="N6-(pyridoxal phosphate)lysine" evidence="1">
    <location>
        <position position="688"/>
    </location>
</feature>
<evidence type="ECO:0000250" key="1"/>
<evidence type="ECO:0000305" key="2"/>
<accession>P53537</accession>
<organism>
    <name type="scientific">Vicia faba</name>
    <name type="common">Broad bean</name>
    <name type="synonym">Faba vulgaris</name>
    <dbReference type="NCBI Taxonomy" id="3906"/>
    <lineage>
        <taxon>Eukaryota</taxon>
        <taxon>Viridiplantae</taxon>
        <taxon>Streptophyta</taxon>
        <taxon>Embryophyta</taxon>
        <taxon>Tracheophyta</taxon>
        <taxon>Spermatophyta</taxon>
        <taxon>Magnoliopsida</taxon>
        <taxon>eudicotyledons</taxon>
        <taxon>Gunneridae</taxon>
        <taxon>Pentapetalae</taxon>
        <taxon>rosids</taxon>
        <taxon>fabids</taxon>
        <taxon>Fabales</taxon>
        <taxon>Fabaceae</taxon>
        <taxon>Papilionoideae</taxon>
        <taxon>50 kb inversion clade</taxon>
        <taxon>NPAAA clade</taxon>
        <taxon>Hologalegina</taxon>
        <taxon>IRL clade</taxon>
        <taxon>Fabeae</taxon>
        <taxon>Vicia</taxon>
    </lineage>
</organism>
<protein>
    <recommendedName>
        <fullName>Alpha-glucan phosphorylase, H isozyme</fullName>
        <ecNumber>2.4.1.1</ecNumber>
    </recommendedName>
    <alternativeName>
        <fullName>Starch phosphorylase H</fullName>
    </alternativeName>
</protein>
<proteinExistence type="evidence at transcript level"/>
<dbReference type="EC" id="2.4.1.1"/>
<dbReference type="EMBL" id="Z35117">
    <property type="protein sequence ID" value="CAA84494.1"/>
    <property type="molecule type" value="mRNA"/>
</dbReference>
<dbReference type="PIR" id="T12091">
    <property type="entry name" value="T12091"/>
</dbReference>
<dbReference type="SMR" id="P53537"/>
<dbReference type="CAZy" id="GT35">
    <property type="family name" value="Glycosyltransferase Family 35"/>
</dbReference>
<dbReference type="GO" id="GO:0005737">
    <property type="term" value="C:cytoplasm"/>
    <property type="evidence" value="ECO:0007669"/>
    <property type="project" value="UniProtKB-SubCell"/>
</dbReference>
<dbReference type="GO" id="GO:0008184">
    <property type="term" value="F:glycogen phosphorylase activity"/>
    <property type="evidence" value="ECO:0007669"/>
    <property type="project" value="InterPro"/>
</dbReference>
<dbReference type="GO" id="GO:0030170">
    <property type="term" value="F:pyridoxal phosphate binding"/>
    <property type="evidence" value="ECO:0007669"/>
    <property type="project" value="InterPro"/>
</dbReference>
<dbReference type="GO" id="GO:0005980">
    <property type="term" value="P:glycogen catabolic process"/>
    <property type="evidence" value="ECO:0007669"/>
    <property type="project" value="TreeGrafter"/>
</dbReference>
<dbReference type="CDD" id="cd04300">
    <property type="entry name" value="GT35_Glycogen_Phosphorylase"/>
    <property type="match status" value="1"/>
</dbReference>
<dbReference type="FunFam" id="3.40.50.2000:FF:000003">
    <property type="entry name" value="Alpha-1,4 glucan phosphorylase"/>
    <property type="match status" value="1"/>
</dbReference>
<dbReference type="FunFam" id="3.40.50.2000:FF:000153">
    <property type="entry name" value="Alpha-1,4 glucan phosphorylase"/>
    <property type="match status" value="1"/>
</dbReference>
<dbReference type="Gene3D" id="3.40.50.2000">
    <property type="entry name" value="Glycogen Phosphorylase B"/>
    <property type="match status" value="2"/>
</dbReference>
<dbReference type="InterPro" id="IPR011833">
    <property type="entry name" value="Glycg_phsphrylas"/>
</dbReference>
<dbReference type="InterPro" id="IPR000811">
    <property type="entry name" value="Glyco_trans_35"/>
</dbReference>
<dbReference type="InterPro" id="IPR035090">
    <property type="entry name" value="Pyridoxal_P_attach_site"/>
</dbReference>
<dbReference type="NCBIfam" id="TIGR02093">
    <property type="entry name" value="P_ylase"/>
    <property type="match status" value="1"/>
</dbReference>
<dbReference type="PANTHER" id="PTHR11468:SF4">
    <property type="entry name" value="ALPHA-GLUCAN PHOSPHORYLASE 2, CYTOSOLIC"/>
    <property type="match status" value="1"/>
</dbReference>
<dbReference type="PANTHER" id="PTHR11468">
    <property type="entry name" value="GLYCOGEN PHOSPHORYLASE"/>
    <property type="match status" value="1"/>
</dbReference>
<dbReference type="Pfam" id="PF00343">
    <property type="entry name" value="Phosphorylase"/>
    <property type="match status" value="1"/>
</dbReference>
<dbReference type="PIRSF" id="PIRSF000460">
    <property type="entry name" value="Pprylas_GlgP"/>
    <property type="match status" value="1"/>
</dbReference>
<dbReference type="SUPFAM" id="SSF53756">
    <property type="entry name" value="UDP-Glycosyltransferase/glycogen phosphorylase"/>
    <property type="match status" value="1"/>
</dbReference>
<dbReference type="PROSITE" id="PS00102">
    <property type="entry name" value="PHOSPHORYLASE"/>
    <property type="match status" value="1"/>
</dbReference>
<reference key="1">
    <citation type="journal article" date="1996" name="Planta">
        <title>Glucan phosphorylases in Vicia faba L.: cloning, structural analysis and expression patterns of cytosolic and plastidic forms in relation to starch.</title>
        <authorList>
            <person name="Buchner P."/>
            <person name="Borisjuk L."/>
            <person name="Wobus U."/>
        </authorList>
    </citation>
    <scope>NUCLEOTIDE SEQUENCE [MRNA]</scope>
    <source>
        <strain>cv. Fribo</strain>
        <tissue>Cotyledon</tissue>
    </source>
</reference>
<comment type="function">
    <text>Phosphorylase is an important allosteric enzyme in carbohydrate metabolism. Enzymes from different sources differ in their regulatory mechanisms and in their natural substrates. However, all known phosphorylases share catalytic and structural properties.</text>
</comment>
<comment type="function">
    <text>The H isoform exhibits higher affinity for branched polyglucans such as soluble starch or glycogen.</text>
</comment>
<comment type="catalytic activity">
    <reaction>
        <text>[(1-&gt;4)-alpha-D-glucosyl](n) + phosphate = [(1-&gt;4)-alpha-D-glucosyl](n-1) + alpha-D-glucose 1-phosphate</text>
        <dbReference type="Rhea" id="RHEA:41732"/>
        <dbReference type="Rhea" id="RHEA-COMP:9584"/>
        <dbReference type="Rhea" id="RHEA-COMP:9586"/>
        <dbReference type="ChEBI" id="CHEBI:15444"/>
        <dbReference type="ChEBI" id="CHEBI:43474"/>
        <dbReference type="ChEBI" id="CHEBI:58601"/>
        <dbReference type="EC" id="2.4.1.1"/>
    </reaction>
</comment>
<comment type="cofactor">
    <cofactor>
        <name>pyridoxal 5'-phosphate</name>
        <dbReference type="ChEBI" id="CHEBI:597326"/>
    </cofactor>
</comment>
<comment type="subcellular location">
    <subcellularLocation>
        <location>Cytoplasm</location>
    </subcellularLocation>
</comment>
<comment type="similarity">
    <text evidence="2">Belongs to the glycogen phosphorylase family.</text>
</comment>
<keyword id="KW-0021">Allosteric enzyme</keyword>
<keyword id="KW-0119">Carbohydrate metabolism</keyword>
<keyword id="KW-0963">Cytoplasm</keyword>
<keyword id="KW-0328">Glycosyltransferase</keyword>
<keyword id="KW-0663">Pyridoxal phosphate</keyword>
<keyword id="KW-0808">Transferase</keyword>
<sequence>MGFKVETNGGDGSLVSAKVPPLANPLAEKPDEIASNISYHAQYTPHFSPFKFQLQQAYYATAESVRDRLIQQWNETYLHFHKVDPKQTYYLSMEFLQGRALTNAIGNLNIQDAYADALRKFGLELEEITEQEKDAALGNGGLGRLASCFLDSMATLNLPAWGYGLRYRYGLFKQIITKEGQEEVAEDWLEKFSPWEIVRHDVLYPIRFFGQVEVNPDGSRQWIGGEVIQALAYDVPIPGYQTKNTISLRLWEAKACADDFDLFLFNDGQLESASVLHSRAQQICSVLYPGDATEGGKLLRLKQQYFLCSASLQDIISRFKERRQGPWNWSEFPTKVAVQLNDTHPTLSIPELMRLLMDDEGLGWDEAWAVTSKTVAYTNHTVLPEALEKWSQPVMWKLLPRHMEIIEEIDRRFVALISKTRLDLEDEVSNMRILDNNLQKPVVRMANLCVVSSHTVNGVAQLHSDILKSELFASYVSIWPTKFQNKTNGITPRRWINFCSPELSRIITKWLKTDKWVTNLDLLTGLREFADNEDLQAEWLSAKRANKQRLAQYVLQVTGENIDPDSLFDIQVKRIHEYKRQLLNILGVIYRYKKLKEMSPEERKSTTARTVMIGGKAFATYTNAKRIVKLVDDVGSVVNSDPEVNSYLKVVFVPNYNVSVAEVLIPGSELSQHISTAGMEASGTSNMKFALNRVLIIGTLDGANVEIREEIGEENFFLFGATADEVPRLRKERENGLFKPDPRFEEAKKFIRSGVFGSYDYNPLLDSLEGNSGYGRGDYFLVGYDFPSYMDAQEKVDEAYRDKKRWLKMSILSTAGSGKFSSDRTIAQYAKEIWNIEECRVP</sequence>
<name>PHSH_VICFA</name>